<evidence type="ECO:0000255" key="1">
    <source>
        <dbReference type="HAMAP-Rule" id="MF_01959"/>
    </source>
</evidence>
<protein>
    <recommendedName>
        <fullName evidence="1">Cytochrome c-type biogenesis protein CcmE</fullName>
    </recommendedName>
    <alternativeName>
        <fullName evidence="1">Cytochrome c maturation protein E</fullName>
    </alternativeName>
    <alternativeName>
        <fullName evidence="1">Heme chaperone CcmE</fullName>
    </alternativeName>
</protein>
<comment type="function">
    <text evidence="1">Heme chaperone required for the biogenesis of c-type cytochromes. Transiently binds heme delivered by CcmC and transfers the heme to apo-cytochromes in a process facilitated by CcmF and CcmH.</text>
</comment>
<comment type="subcellular location">
    <subcellularLocation>
        <location evidence="1">Cell inner membrane</location>
        <topology evidence="1">Single-pass type II membrane protein</topology>
        <orientation evidence="1">Periplasmic side</orientation>
    </subcellularLocation>
</comment>
<comment type="similarity">
    <text evidence="1">Belongs to the CcmE/CycJ family.</text>
</comment>
<feature type="chain" id="PRO_0000238839" description="Cytochrome c-type biogenesis protein CcmE">
    <location>
        <begin position="1"/>
        <end position="151"/>
    </location>
</feature>
<feature type="topological domain" description="Cytoplasmic" evidence="1">
    <location>
        <begin position="1"/>
        <end position="8"/>
    </location>
</feature>
<feature type="transmembrane region" description="Helical; Signal-anchor for type II membrane protein" evidence="1">
    <location>
        <begin position="9"/>
        <end position="29"/>
    </location>
</feature>
<feature type="topological domain" description="Periplasmic" evidence="1">
    <location>
        <begin position="30"/>
        <end position="151"/>
    </location>
</feature>
<feature type="binding site" description="covalent" evidence="1">
    <location>
        <position position="124"/>
    </location>
    <ligand>
        <name>heme</name>
        <dbReference type="ChEBI" id="CHEBI:30413"/>
    </ligand>
</feature>
<feature type="binding site" description="axial binding residue" evidence="1">
    <location>
        <position position="128"/>
    </location>
    <ligand>
        <name>heme</name>
        <dbReference type="ChEBI" id="CHEBI:30413"/>
    </ligand>
    <ligandPart>
        <name>Fe</name>
        <dbReference type="ChEBI" id="CHEBI:18248"/>
    </ligandPart>
</feature>
<name>CCME_PSEFC</name>
<proteinExistence type="inferred from homology"/>
<accession>Q51752</accession>
<sequence length="151" mass="16085">MNPLRRKRLLIILAILVGVGVAVGLALSALQQNINLFYTPTQIANGEAPQDTRIRAGGMVEAGSLKRSGDSLDVTFVVTDFNKSVTITYRGILPDLFREGQGIVALGKINADGVVVADEVLAKHDEKYMPPEVTKALKESGQSAPTPAKEG</sequence>
<dbReference type="EMBL" id="Z47979">
    <property type="protein sequence ID" value="CAA88017.1"/>
    <property type="molecule type" value="Genomic_DNA"/>
</dbReference>
<dbReference type="SMR" id="Q51752"/>
<dbReference type="GO" id="GO:0005886">
    <property type="term" value="C:plasma membrane"/>
    <property type="evidence" value="ECO:0007669"/>
    <property type="project" value="UniProtKB-SubCell"/>
</dbReference>
<dbReference type="GO" id="GO:0020037">
    <property type="term" value="F:heme binding"/>
    <property type="evidence" value="ECO:0007669"/>
    <property type="project" value="InterPro"/>
</dbReference>
<dbReference type="GO" id="GO:0046872">
    <property type="term" value="F:metal ion binding"/>
    <property type="evidence" value="ECO:0007669"/>
    <property type="project" value="UniProtKB-KW"/>
</dbReference>
<dbReference type="GO" id="GO:0017004">
    <property type="term" value="P:cytochrome complex assembly"/>
    <property type="evidence" value="ECO:0007669"/>
    <property type="project" value="UniProtKB-KW"/>
</dbReference>
<dbReference type="FunFam" id="2.40.50.140:FF:000104">
    <property type="entry name" value="Cytochrome c-type biogenesis protein CcmE"/>
    <property type="match status" value="1"/>
</dbReference>
<dbReference type="Gene3D" id="2.40.50.140">
    <property type="entry name" value="Nucleic acid-binding proteins"/>
    <property type="match status" value="1"/>
</dbReference>
<dbReference type="HAMAP" id="MF_01959">
    <property type="entry name" value="CcmE"/>
    <property type="match status" value="1"/>
</dbReference>
<dbReference type="InterPro" id="IPR004329">
    <property type="entry name" value="CcmE"/>
</dbReference>
<dbReference type="InterPro" id="IPR036127">
    <property type="entry name" value="CcmE-like_sf"/>
</dbReference>
<dbReference type="InterPro" id="IPR012340">
    <property type="entry name" value="NA-bd_OB-fold"/>
</dbReference>
<dbReference type="NCBIfam" id="NF009727">
    <property type="entry name" value="PRK13254.1-1"/>
    <property type="match status" value="1"/>
</dbReference>
<dbReference type="NCBIfam" id="NF009729">
    <property type="entry name" value="PRK13254.1-3"/>
    <property type="match status" value="1"/>
</dbReference>
<dbReference type="NCBIfam" id="NF009731">
    <property type="entry name" value="PRK13254.1-5"/>
    <property type="match status" value="1"/>
</dbReference>
<dbReference type="PANTHER" id="PTHR34128">
    <property type="entry name" value="CYTOCHROME C-TYPE BIOGENESIS PROTEIN CCME HOMOLOG, MITOCHONDRIAL"/>
    <property type="match status" value="1"/>
</dbReference>
<dbReference type="PANTHER" id="PTHR34128:SF2">
    <property type="entry name" value="CYTOCHROME C-TYPE BIOGENESIS PROTEIN CCME HOMOLOG, MITOCHONDRIAL"/>
    <property type="match status" value="1"/>
</dbReference>
<dbReference type="Pfam" id="PF03100">
    <property type="entry name" value="CcmE"/>
    <property type="match status" value="1"/>
</dbReference>
<dbReference type="SUPFAM" id="SSF82093">
    <property type="entry name" value="Heme chaperone CcmE"/>
    <property type="match status" value="1"/>
</dbReference>
<reference key="1">
    <citation type="journal article" date="1996" name="Mol. Microbiol.">
        <title>A cytochrome c biogenesis gene involved in pyoverdine production in Pseudomonas fluorescens ATCC 17400.</title>
        <authorList>
            <person name="Gaballa A."/>
            <person name="Koedam N."/>
            <person name="Cornelis P."/>
        </authorList>
    </citation>
    <scope>NUCLEOTIDE SEQUENCE [GENOMIC DNA]</scope>
    <source>
        <strain>ATCC 17400 / DSM 50117 / ICPB 2656-18 / NBRC 15833 / NCIMB 10460 / Stanier C-18</strain>
    </source>
</reference>
<organism>
    <name type="scientific">Pseudomonas fluorescens biotype C</name>
    <dbReference type="NCBI Taxonomy" id="335"/>
    <lineage>
        <taxon>Bacteria</taxon>
        <taxon>Pseudomonadati</taxon>
        <taxon>Pseudomonadota</taxon>
        <taxon>Gammaproteobacteria</taxon>
        <taxon>Pseudomonadales</taxon>
        <taxon>Pseudomonadaceae</taxon>
        <taxon>Pseudomonas</taxon>
    </lineage>
</organism>
<gene>
    <name evidence="1" type="primary">ccmE</name>
    <name evidence="1" type="synonym">cycJ</name>
    <name type="synonym">cytC</name>
</gene>
<keyword id="KW-0997">Cell inner membrane</keyword>
<keyword id="KW-1003">Cell membrane</keyword>
<keyword id="KW-0201">Cytochrome c-type biogenesis</keyword>
<keyword id="KW-0349">Heme</keyword>
<keyword id="KW-0408">Iron</keyword>
<keyword id="KW-0472">Membrane</keyword>
<keyword id="KW-0479">Metal-binding</keyword>
<keyword id="KW-0735">Signal-anchor</keyword>
<keyword id="KW-0812">Transmembrane</keyword>
<keyword id="KW-1133">Transmembrane helix</keyword>